<name>CLPS_JANMA</name>
<protein>
    <recommendedName>
        <fullName evidence="1">ATP-dependent Clp protease adapter protein ClpS</fullName>
    </recommendedName>
</protein>
<proteinExistence type="inferred from homology"/>
<gene>
    <name evidence="1" type="primary">clpS</name>
    <name type="ordered locus">mma_2515</name>
</gene>
<organism>
    <name type="scientific">Janthinobacterium sp. (strain Marseille)</name>
    <name type="common">Minibacterium massiliensis</name>
    <dbReference type="NCBI Taxonomy" id="375286"/>
    <lineage>
        <taxon>Bacteria</taxon>
        <taxon>Pseudomonadati</taxon>
        <taxon>Pseudomonadota</taxon>
        <taxon>Betaproteobacteria</taxon>
        <taxon>Burkholderiales</taxon>
        <taxon>Oxalobacteraceae</taxon>
        <taxon>Janthinobacterium</taxon>
    </lineage>
</organism>
<reference key="1">
    <citation type="journal article" date="2007" name="PLoS Genet.">
        <title>Genome analysis of Minibacterium massiliensis highlights the convergent evolution of water-living bacteria.</title>
        <authorList>
            <person name="Audic S."/>
            <person name="Robert C."/>
            <person name="Campagna B."/>
            <person name="Parinello H."/>
            <person name="Claverie J.-M."/>
            <person name="Raoult D."/>
            <person name="Drancourt M."/>
        </authorList>
    </citation>
    <scope>NUCLEOTIDE SEQUENCE [LARGE SCALE GENOMIC DNA]</scope>
    <source>
        <strain>Marseille</strain>
    </source>
</reference>
<evidence type="ECO:0000255" key="1">
    <source>
        <dbReference type="HAMAP-Rule" id="MF_00302"/>
    </source>
</evidence>
<accession>A6T108</accession>
<comment type="function">
    <text evidence="1">Involved in the modulation of the specificity of the ClpAP-mediated ATP-dependent protein degradation.</text>
</comment>
<comment type="subunit">
    <text evidence="1">Binds to the N-terminal domain of the chaperone ClpA.</text>
</comment>
<comment type="similarity">
    <text evidence="1">Belongs to the ClpS family.</text>
</comment>
<sequence>MAIKHDDGTVLMRQEQKLKPPSMYQVLLLNDDYTPMEFVVLILQEYFSKDRETATQIMLMVHRDGKGICGVYPKDIASTKVELVLNHARKAGHPLQCVMEEV</sequence>
<feature type="chain" id="PRO_1000132811" description="ATP-dependent Clp protease adapter protein ClpS">
    <location>
        <begin position="1"/>
        <end position="102"/>
    </location>
</feature>
<dbReference type="EMBL" id="CP000269">
    <property type="protein sequence ID" value="ABR91602.1"/>
    <property type="molecule type" value="Genomic_DNA"/>
</dbReference>
<dbReference type="RefSeq" id="WP_012080368.1">
    <property type="nucleotide sequence ID" value="NC_009659.1"/>
</dbReference>
<dbReference type="SMR" id="A6T108"/>
<dbReference type="STRING" id="375286.mma_2515"/>
<dbReference type="KEGG" id="mms:mma_2515"/>
<dbReference type="eggNOG" id="COG2127">
    <property type="taxonomic scope" value="Bacteria"/>
</dbReference>
<dbReference type="HOGENOM" id="CLU_134358_2_1_4"/>
<dbReference type="OrthoDB" id="9796121at2"/>
<dbReference type="Proteomes" id="UP000006388">
    <property type="component" value="Chromosome"/>
</dbReference>
<dbReference type="GO" id="GO:0030163">
    <property type="term" value="P:protein catabolic process"/>
    <property type="evidence" value="ECO:0007669"/>
    <property type="project" value="InterPro"/>
</dbReference>
<dbReference type="GO" id="GO:0006508">
    <property type="term" value="P:proteolysis"/>
    <property type="evidence" value="ECO:0007669"/>
    <property type="project" value="UniProtKB-UniRule"/>
</dbReference>
<dbReference type="FunFam" id="3.30.1390.10:FF:000002">
    <property type="entry name" value="ATP-dependent Clp protease adapter protein ClpS"/>
    <property type="match status" value="1"/>
</dbReference>
<dbReference type="Gene3D" id="3.30.1390.10">
    <property type="match status" value="1"/>
</dbReference>
<dbReference type="HAMAP" id="MF_00302">
    <property type="entry name" value="ClpS"/>
    <property type="match status" value="1"/>
</dbReference>
<dbReference type="InterPro" id="IPR022935">
    <property type="entry name" value="ClpS"/>
</dbReference>
<dbReference type="InterPro" id="IPR003769">
    <property type="entry name" value="ClpS_core"/>
</dbReference>
<dbReference type="InterPro" id="IPR014719">
    <property type="entry name" value="Ribosomal_bL12_C/ClpS-like"/>
</dbReference>
<dbReference type="NCBIfam" id="NF000672">
    <property type="entry name" value="PRK00033.1-5"/>
    <property type="match status" value="1"/>
</dbReference>
<dbReference type="PANTHER" id="PTHR33473:SF19">
    <property type="entry name" value="ATP-DEPENDENT CLP PROTEASE ADAPTER PROTEIN CLPS"/>
    <property type="match status" value="1"/>
</dbReference>
<dbReference type="PANTHER" id="PTHR33473">
    <property type="entry name" value="ATP-DEPENDENT CLP PROTEASE ADAPTER PROTEIN CLPS1, CHLOROPLASTIC"/>
    <property type="match status" value="1"/>
</dbReference>
<dbReference type="Pfam" id="PF02617">
    <property type="entry name" value="ClpS"/>
    <property type="match status" value="1"/>
</dbReference>
<dbReference type="SUPFAM" id="SSF54736">
    <property type="entry name" value="ClpS-like"/>
    <property type="match status" value="1"/>
</dbReference>